<name>GHRB_KLEP7</name>
<keyword id="KW-0963">Cytoplasm</keyword>
<keyword id="KW-0520">NAD</keyword>
<keyword id="KW-0521">NADP</keyword>
<keyword id="KW-0560">Oxidoreductase</keyword>
<gene>
    <name evidence="1" type="primary">ghrB</name>
    <name type="ordered locus">KPN78578_38770</name>
    <name type="ORF">KPN_03915</name>
</gene>
<dbReference type="EC" id="1.1.1.79" evidence="1"/>
<dbReference type="EC" id="1.1.1.81" evidence="1"/>
<dbReference type="EMBL" id="CP000647">
    <property type="protein sequence ID" value="ABR79301.1"/>
    <property type="molecule type" value="Genomic_DNA"/>
</dbReference>
<dbReference type="RefSeq" id="WP_004145219.1">
    <property type="nucleotide sequence ID" value="NC_009648.1"/>
</dbReference>
<dbReference type="SMR" id="A6TFG7"/>
<dbReference type="STRING" id="272620.KPN_03915"/>
<dbReference type="jPOST" id="A6TFG7"/>
<dbReference type="PaxDb" id="272620-KPN_03915"/>
<dbReference type="EnsemblBacteria" id="ABR79301">
    <property type="protein sequence ID" value="ABR79301"/>
    <property type="gene ID" value="KPN_03915"/>
</dbReference>
<dbReference type="KEGG" id="kpn:KPN_03915"/>
<dbReference type="HOGENOM" id="CLU_019796_1_2_6"/>
<dbReference type="Proteomes" id="UP000000265">
    <property type="component" value="Chromosome"/>
</dbReference>
<dbReference type="GO" id="GO:0005829">
    <property type="term" value="C:cytosol"/>
    <property type="evidence" value="ECO:0007669"/>
    <property type="project" value="TreeGrafter"/>
</dbReference>
<dbReference type="GO" id="GO:0005886">
    <property type="term" value="C:plasma membrane"/>
    <property type="evidence" value="ECO:0007669"/>
    <property type="project" value="UniProtKB-UniRule"/>
</dbReference>
<dbReference type="GO" id="GO:0030267">
    <property type="term" value="F:glyoxylate reductase (NADPH) activity"/>
    <property type="evidence" value="ECO:0007669"/>
    <property type="project" value="UniProtKB-UniRule"/>
</dbReference>
<dbReference type="GO" id="GO:0008465">
    <property type="term" value="F:hydroxypyruvate reductase (NADH) activity"/>
    <property type="evidence" value="ECO:0007669"/>
    <property type="project" value="RHEA"/>
</dbReference>
<dbReference type="GO" id="GO:0120509">
    <property type="term" value="F:hydroxypyruvate reductase (NADPH) activity"/>
    <property type="evidence" value="ECO:0007669"/>
    <property type="project" value="RHEA"/>
</dbReference>
<dbReference type="GO" id="GO:0051287">
    <property type="term" value="F:NAD binding"/>
    <property type="evidence" value="ECO:0007669"/>
    <property type="project" value="InterPro"/>
</dbReference>
<dbReference type="CDD" id="cd05301">
    <property type="entry name" value="GDH"/>
    <property type="match status" value="1"/>
</dbReference>
<dbReference type="FunFam" id="3.40.50.720:FF:000026">
    <property type="entry name" value="Glyoxylate/hydroxypyruvate reductase B"/>
    <property type="match status" value="1"/>
</dbReference>
<dbReference type="Gene3D" id="3.40.50.720">
    <property type="entry name" value="NAD(P)-binding Rossmann-like Domain"/>
    <property type="match status" value="2"/>
</dbReference>
<dbReference type="HAMAP" id="MF_01667">
    <property type="entry name" value="2_Hacid_dh_C_GhrB"/>
    <property type="match status" value="1"/>
</dbReference>
<dbReference type="InterPro" id="IPR050223">
    <property type="entry name" value="D-isomer_2-hydroxyacid_DH"/>
</dbReference>
<dbReference type="InterPro" id="IPR006139">
    <property type="entry name" value="D-isomer_2_OHA_DH_cat_dom"/>
</dbReference>
<dbReference type="InterPro" id="IPR029753">
    <property type="entry name" value="D-isomer_DH_CS"/>
</dbReference>
<dbReference type="InterPro" id="IPR006140">
    <property type="entry name" value="D-isomer_DH_NAD-bd"/>
</dbReference>
<dbReference type="InterPro" id="IPR023756">
    <property type="entry name" value="Glyo/OHPyrv_Rdtase_B"/>
</dbReference>
<dbReference type="InterPro" id="IPR036291">
    <property type="entry name" value="NAD(P)-bd_dom_sf"/>
</dbReference>
<dbReference type="NCBIfam" id="NF011938">
    <property type="entry name" value="PRK15409.1"/>
    <property type="match status" value="1"/>
</dbReference>
<dbReference type="PANTHER" id="PTHR10996">
    <property type="entry name" value="2-HYDROXYACID DEHYDROGENASE-RELATED"/>
    <property type="match status" value="1"/>
</dbReference>
<dbReference type="PANTHER" id="PTHR10996:SF283">
    <property type="entry name" value="GLYOXYLATE_HYDROXYPYRUVATE REDUCTASE B"/>
    <property type="match status" value="1"/>
</dbReference>
<dbReference type="Pfam" id="PF00389">
    <property type="entry name" value="2-Hacid_dh"/>
    <property type="match status" value="1"/>
</dbReference>
<dbReference type="Pfam" id="PF02826">
    <property type="entry name" value="2-Hacid_dh_C"/>
    <property type="match status" value="1"/>
</dbReference>
<dbReference type="SUPFAM" id="SSF52283">
    <property type="entry name" value="Formate/glycerate dehydrogenase catalytic domain-like"/>
    <property type="match status" value="1"/>
</dbReference>
<dbReference type="SUPFAM" id="SSF51735">
    <property type="entry name" value="NAD(P)-binding Rossmann-fold domains"/>
    <property type="match status" value="1"/>
</dbReference>
<dbReference type="PROSITE" id="PS00670">
    <property type="entry name" value="D_2_HYDROXYACID_DH_2"/>
    <property type="match status" value="1"/>
</dbReference>
<dbReference type="PROSITE" id="PS00671">
    <property type="entry name" value="D_2_HYDROXYACID_DH_3"/>
    <property type="match status" value="1"/>
</dbReference>
<accession>A6TFG7</accession>
<feature type="chain" id="PRO_0000348392" description="Glyoxylate/hydroxypyruvate reductase B">
    <location>
        <begin position="1"/>
        <end position="323"/>
    </location>
</feature>
<feature type="active site" evidence="1">
    <location>
        <position position="237"/>
    </location>
</feature>
<feature type="active site" evidence="1">
    <location>
        <position position="266"/>
    </location>
</feature>
<feature type="active site" description="Proton donor" evidence="1">
    <location>
        <position position="285"/>
    </location>
</feature>
<organism>
    <name type="scientific">Klebsiella pneumoniae subsp. pneumoniae (strain ATCC 700721 / MGH 78578)</name>
    <dbReference type="NCBI Taxonomy" id="272620"/>
    <lineage>
        <taxon>Bacteria</taxon>
        <taxon>Pseudomonadati</taxon>
        <taxon>Pseudomonadota</taxon>
        <taxon>Gammaproteobacteria</taxon>
        <taxon>Enterobacterales</taxon>
        <taxon>Enterobacteriaceae</taxon>
        <taxon>Klebsiella/Raoultella group</taxon>
        <taxon>Klebsiella</taxon>
        <taxon>Klebsiella pneumoniae complex</taxon>
    </lineage>
</organism>
<sequence length="323" mass="35433">MKPSVILYKTLPDDLLQRLEEHFSVTQVKNLRPETVSQHAEAFAQAEGLLGSSEKVDAALLEKMPKLRATSTVSVGYDNFDVEALNARRVLLMHTPTVLTETVADTVMALVLSTARRVVEVAERVKAGEWTKSIGPDWFGTDVHHKTLGIVGMGRIGMALAQRAHFGFGMPILYNARRQHPQAEERFNARYCDLDTLLQEADFVCLILPLSEETHHLFGQAQFAKMKSSAIFINAGRGPVVDEQALIAALQNGEIHAAGLDVFEHEPLAKDSPLLSLPNVVALPHIGSATHETRYNMAACAVDNLIDALNGNVEKNCVNPQVK</sequence>
<evidence type="ECO:0000255" key="1">
    <source>
        <dbReference type="HAMAP-Rule" id="MF_01667"/>
    </source>
</evidence>
<reference key="1">
    <citation type="submission" date="2006-09" db="EMBL/GenBank/DDBJ databases">
        <authorList>
            <consortium name="The Klebsiella pneumonia Genome Sequencing Project"/>
            <person name="McClelland M."/>
            <person name="Sanderson E.K."/>
            <person name="Spieth J."/>
            <person name="Clifton W.S."/>
            <person name="Latreille P."/>
            <person name="Sabo A."/>
            <person name="Pepin K."/>
            <person name="Bhonagiri V."/>
            <person name="Porwollik S."/>
            <person name="Ali J."/>
            <person name="Wilson R.K."/>
        </authorList>
    </citation>
    <scope>NUCLEOTIDE SEQUENCE [LARGE SCALE GENOMIC DNA]</scope>
    <source>
        <strain>ATCC 700721 / MGH 78578</strain>
    </source>
</reference>
<protein>
    <recommendedName>
        <fullName evidence="1">Glyoxylate/hydroxypyruvate reductase B</fullName>
        <ecNumber evidence="1">1.1.1.79</ecNumber>
        <ecNumber evidence="1">1.1.1.81</ecNumber>
    </recommendedName>
</protein>
<comment type="function">
    <text evidence="1">Catalyzes the NADPH-dependent reduction of glyoxylate and hydroxypyruvate into glycolate and glycerate, respectively.</text>
</comment>
<comment type="catalytic activity">
    <reaction evidence="1">
        <text>glycolate + NADP(+) = glyoxylate + NADPH + H(+)</text>
        <dbReference type="Rhea" id="RHEA:10992"/>
        <dbReference type="ChEBI" id="CHEBI:15378"/>
        <dbReference type="ChEBI" id="CHEBI:29805"/>
        <dbReference type="ChEBI" id="CHEBI:36655"/>
        <dbReference type="ChEBI" id="CHEBI:57783"/>
        <dbReference type="ChEBI" id="CHEBI:58349"/>
        <dbReference type="EC" id="1.1.1.79"/>
    </reaction>
</comment>
<comment type="catalytic activity">
    <reaction evidence="1">
        <text>(R)-glycerate + NAD(+) = 3-hydroxypyruvate + NADH + H(+)</text>
        <dbReference type="Rhea" id="RHEA:17905"/>
        <dbReference type="ChEBI" id="CHEBI:15378"/>
        <dbReference type="ChEBI" id="CHEBI:16659"/>
        <dbReference type="ChEBI" id="CHEBI:17180"/>
        <dbReference type="ChEBI" id="CHEBI:57540"/>
        <dbReference type="ChEBI" id="CHEBI:57945"/>
        <dbReference type="EC" id="1.1.1.81"/>
    </reaction>
</comment>
<comment type="catalytic activity">
    <reaction evidence="1">
        <text>(R)-glycerate + NADP(+) = 3-hydroxypyruvate + NADPH + H(+)</text>
        <dbReference type="Rhea" id="RHEA:18657"/>
        <dbReference type="ChEBI" id="CHEBI:15378"/>
        <dbReference type="ChEBI" id="CHEBI:16659"/>
        <dbReference type="ChEBI" id="CHEBI:17180"/>
        <dbReference type="ChEBI" id="CHEBI:57783"/>
        <dbReference type="ChEBI" id="CHEBI:58349"/>
        <dbReference type="EC" id="1.1.1.81"/>
    </reaction>
</comment>
<comment type="subunit">
    <text evidence="1">Homodimer.</text>
</comment>
<comment type="subcellular location">
    <subcellularLocation>
        <location evidence="1">Cytoplasm</location>
    </subcellularLocation>
</comment>
<comment type="similarity">
    <text evidence="1">Belongs to the D-isomer specific 2-hydroxyacid dehydrogenase family. GhrB subfamily.</text>
</comment>
<proteinExistence type="inferred from homology"/>